<comment type="function">
    <text evidence="1">Associates with the EF-Tu.GDP complex and induces the exchange of GDP to GTP. It remains bound to the aminoacyl-tRNA.EF-Tu.GTP complex up to the GTP hydrolysis stage on the ribosome.</text>
</comment>
<comment type="subcellular location">
    <subcellularLocation>
        <location evidence="1">Cytoplasm</location>
    </subcellularLocation>
</comment>
<comment type="similarity">
    <text evidence="1">Belongs to the EF-Ts family.</text>
</comment>
<sequence>MAITAQMVKELRESTGAGMMDAKKALTETDGDMEAAVDWLRTKGLAKAAKKAGRTAAEGLVGVAVSGGTGVAVEVNSETDFVAKNADFQTMVTGFTQAALSVDDVEALKAADMGGKTVETTLQETIAVIGENMTLRRMAKISGDSVAAYVHNAAADGLGKIGVLVAVKGADNGIAKQIAMHIAATSPMALSEADLDPTLVERERAVQTQKALEENAASAKPKPDSVIENNIIPGRMKKFLEENTLLGQKFVINPDVTVAEAAKQAGVEILGFVRMAVGEGIEKEKEDFAAEVAKTLAG</sequence>
<protein>
    <recommendedName>
        <fullName evidence="1">Elongation factor Ts</fullName>
        <shortName evidence="1">EF-Ts</shortName>
    </recommendedName>
</protein>
<keyword id="KW-0963">Cytoplasm</keyword>
<keyword id="KW-0251">Elongation factor</keyword>
<keyword id="KW-0648">Protein biosynthesis</keyword>
<name>EFTS_CERS5</name>
<reference key="1">
    <citation type="submission" date="2007-04" db="EMBL/GenBank/DDBJ databases">
        <title>Complete sequence of chromosome of Rhodobacter sphaeroides ATCC 17025.</title>
        <authorList>
            <consortium name="US DOE Joint Genome Institute"/>
            <person name="Copeland A."/>
            <person name="Lucas S."/>
            <person name="Lapidus A."/>
            <person name="Barry K."/>
            <person name="Detter J.C."/>
            <person name="Glavina del Rio T."/>
            <person name="Hammon N."/>
            <person name="Israni S."/>
            <person name="Dalin E."/>
            <person name="Tice H."/>
            <person name="Pitluck S."/>
            <person name="Chertkov O."/>
            <person name="Brettin T."/>
            <person name="Bruce D."/>
            <person name="Han C."/>
            <person name="Schmutz J."/>
            <person name="Larimer F."/>
            <person name="Land M."/>
            <person name="Hauser L."/>
            <person name="Kyrpides N."/>
            <person name="Kim E."/>
            <person name="Richardson P."/>
            <person name="Mackenzie C."/>
            <person name="Choudhary M."/>
            <person name="Donohue T.J."/>
            <person name="Kaplan S."/>
        </authorList>
    </citation>
    <scope>NUCLEOTIDE SEQUENCE [LARGE SCALE GENOMIC DNA]</scope>
    <source>
        <strain>ATCC 17025 / ATH 2.4.3</strain>
    </source>
</reference>
<dbReference type="EMBL" id="CP000661">
    <property type="protein sequence ID" value="ABP70405.1"/>
    <property type="molecule type" value="Genomic_DNA"/>
</dbReference>
<dbReference type="SMR" id="A4WSP1"/>
<dbReference type="STRING" id="349102.Rsph17025_1511"/>
<dbReference type="KEGG" id="rsq:Rsph17025_1511"/>
<dbReference type="eggNOG" id="COG0264">
    <property type="taxonomic scope" value="Bacteria"/>
</dbReference>
<dbReference type="HOGENOM" id="CLU_047155_2_0_5"/>
<dbReference type="BioCyc" id="RSPH349102:G1G8M-1554-MONOMER"/>
<dbReference type="GO" id="GO:0005737">
    <property type="term" value="C:cytoplasm"/>
    <property type="evidence" value="ECO:0007669"/>
    <property type="project" value="UniProtKB-SubCell"/>
</dbReference>
<dbReference type="GO" id="GO:0003746">
    <property type="term" value="F:translation elongation factor activity"/>
    <property type="evidence" value="ECO:0007669"/>
    <property type="project" value="UniProtKB-UniRule"/>
</dbReference>
<dbReference type="CDD" id="cd14275">
    <property type="entry name" value="UBA_EF-Ts"/>
    <property type="match status" value="1"/>
</dbReference>
<dbReference type="FunFam" id="1.10.8.10:FF:000001">
    <property type="entry name" value="Elongation factor Ts"/>
    <property type="match status" value="1"/>
</dbReference>
<dbReference type="Gene3D" id="1.10.286.20">
    <property type="match status" value="1"/>
</dbReference>
<dbReference type="Gene3D" id="1.10.8.10">
    <property type="entry name" value="DNA helicase RuvA subunit, C-terminal domain"/>
    <property type="match status" value="1"/>
</dbReference>
<dbReference type="Gene3D" id="3.30.479.20">
    <property type="entry name" value="Elongation factor Ts, dimerisation domain"/>
    <property type="match status" value="2"/>
</dbReference>
<dbReference type="HAMAP" id="MF_00050">
    <property type="entry name" value="EF_Ts"/>
    <property type="match status" value="1"/>
</dbReference>
<dbReference type="InterPro" id="IPR036402">
    <property type="entry name" value="EF-Ts_dimer_sf"/>
</dbReference>
<dbReference type="InterPro" id="IPR001816">
    <property type="entry name" value="Transl_elong_EFTs/EF1B"/>
</dbReference>
<dbReference type="InterPro" id="IPR014039">
    <property type="entry name" value="Transl_elong_EFTs/EF1B_dimer"/>
</dbReference>
<dbReference type="InterPro" id="IPR018101">
    <property type="entry name" value="Transl_elong_Ts_CS"/>
</dbReference>
<dbReference type="InterPro" id="IPR009060">
    <property type="entry name" value="UBA-like_sf"/>
</dbReference>
<dbReference type="NCBIfam" id="TIGR00116">
    <property type="entry name" value="tsf"/>
    <property type="match status" value="1"/>
</dbReference>
<dbReference type="PANTHER" id="PTHR11741">
    <property type="entry name" value="ELONGATION FACTOR TS"/>
    <property type="match status" value="1"/>
</dbReference>
<dbReference type="PANTHER" id="PTHR11741:SF0">
    <property type="entry name" value="ELONGATION FACTOR TS, MITOCHONDRIAL"/>
    <property type="match status" value="1"/>
</dbReference>
<dbReference type="Pfam" id="PF00889">
    <property type="entry name" value="EF_TS"/>
    <property type="match status" value="1"/>
</dbReference>
<dbReference type="SUPFAM" id="SSF54713">
    <property type="entry name" value="Elongation factor Ts (EF-Ts), dimerisation domain"/>
    <property type="match status" value="2"/>
</dbReference>
<dbReference type="SUPFAM" id="SSF46934">
    <property type="entry name" value="UBA-like"/>
    <property type="match status" value="1"/>
</dbReference>
<dbReference type="PROSITE" id="PS01126">
    <property type="entry name" value="EF_TS_1"/>
    <property type="match status" value="1"/>
</dbReference>
<dbReference type="PROSITE" id="PS01127">
    <property type="entry name" value="EF_TS_2"/>
    <property type="match status" value="1"/>
</dbReference>
<accession>A4WSP1</accession>
<proteinExistence type="inferred from homology"/>
<organism>
    <name type="scientific">Cereibacter sphaeroides (strain ATCC 17025 / ATH 2.4.3)</name>
    <name type="common">Rhodobacter sphaeroides</name>
    <dbReference type="NCBI Taxonomy" id="349102"/>
    <lineage>
        <taxon>Bacteria</taxon>
        <taxon>Pseudomonadati</taxon>
        <taxon>Pseudomonadota</taxon>
        <taxon>Alphaproteobacteria</taxon>
        <taxon>Rhodobacterales</taxon>
        <taxon>Paracoccaceae</taxon>
        <taxon>Cereibacter</taxon>
    </lineage>
</organism>
<evidence type="ECO:0000255" key="1">
    <source>
        <dbReference type="HAMAP-Rule" id="MF_00050"/>
    </source>
</evidence>
<feature type="chain" id="PRO_1000006163" description="Elongation factor Ts">
    <location>
        <begin position="1"/>
        <end position="298"/>
    </location>
</feature>
<feature type="region of interest" description="Involved in Mg(2+) ion dislocation from EF-Tu" evidence="1">
    <location>
        <begin position="79"/>
        <end position="82"/>
    </location>
</feature>
<gene>
    <name evidence="1" type="primary">tsf</name>
    <name type="ordered locus">Rsph17025_1511</name>
</gene>